<protein>
    <recommendedName>
        <fullName evidence="1">Thiol peroxidase</fullName>
        <shortName evidence="1">Tpx</shortName>
        <ecNumber evidence="1">1.11.1.24</ecNumber>
    </recommendedName>
    <alternativeName>
        <fullName evidence="1">Peroxiredoxin tpx</fullName>
        <shortName evidence="1">Prx</shortName>
    </alternativeName>
    <alternativeName>
        <fullName evidence="1">Thioredoxin peroxidase</fullName>
    </alternativeName>
    <alternativeName>
        <fullName evidence="1">Thioredoxin-dependent peroxiredoxin</fullName>
    </alternativeName>
</protein>
<dbReference type="EC" id="1.11.1.24" evidence="1"/>
<dbReference type="EMBL" id="AE000657">
    <property type="protein sequence ID" value="AAC06736.1"/>
    <property type="molecule type" value="Genomic_DNA"/>
</dbReference>
<dbReference type="PIR" id="H70343">
    <property type="entry name" value="H70343"/>
</dbReference>
<dbReference type="RefSeq" id="NP_213340.1">
    <property type="nucleotide sequence ID" value="NC_000918.1"/>
</dbReference>
<dbReference type="RefSeq" id="WP_010880278.1">
    <property type="nucleotide sequence ID" value="NC_000918.1"/>
</dbReference>
<dbReference type="PDB" id="2YZH">
    <property type="method" value="X-ray"/>
    <property type="resolution" value="1.85 A"/>
    <property type="chains" value="A/B/C/D=1-169"/>
</dbReference>
<dbReference type="PDBsum" id="2YZH"/>
<dbReference type="SMR" id="O66780"/>
<dbReference type="FunCoup" id="O66780">
    <property type="interactions" value="165"/>
</dbReference>
<dbReference type="STRING" id="224324.aq_488"/>
<dbReference type="EnsemblBacteria" id="AAC06736">
    <property type="protein sequence ID" value="AAC06736"/>
    <property type="gene ID" value="aq_488"/>
</dbReference>
<dbReference type="KEGG" id="aae:aq_488"/>
<dbReference type="PATRIC" id="fig|224324.8.peg.401"/>
<dbReference type="eggNOG" id="COG2077">
    <property type="taxonomic scope" value="Bacteria"/>
</dbReference>
<dbReference type="HOGENOM" id="CLU_042529_12_2_0"/>
<dbReference type="InParanoid" id="O66780"/>
<dbReference type="OrthoDB" id="9781543at2"/>
<dbReference type="EvolutionaryTrace" id="O66780"/>
<dbReference type="Proteomes" id="UP000000798">
    <property type="component" value="Chromosome"/>
</dbReference>
<dbReference type="GO" id="GO:0008379">
    <property type="term" value="F:thioredoxin peroxidase activity"/>
    <property type="evidence" value="ECO:0007669"/>
    <property type="project" value="UniProtKB-UniRule"/>
</dbReference>
<dbReference type="CDD" id="cd03014">
    <property type="entry name" value="PRX_Atyp2cys"/>
    <property type="match status" value="1"/>
</dbReference>
<dbReference type="Gene3D" id="3.40.30.10">
    <property type="entry name" value="Glutaredoxin"/>
    <property type="match status" value="1"/>
</dbReference>
<dbReference type="HAMAP" id="MF_00269">
    <property type="entry name" value="Tpx"/>
    <property type="match status" value="1"/>
</dbReference>
<dbReference type="InterPro" id="IPR013740">
    <property type="entry name" value="Redoxin"/>
</dbReference>
<dbReference type="InterPro" id="IPR036249">
    <property type="entry name" value="Thioredoxin-like_sf"/>
</dbReference>
<dbReference type="InterPro" id="IPR013766">
    <property type="entry name" value="Thioredoxin_domain"/>
</dbReference>
<dbReference type="InterPro" id="IPR002065">
    <property type="entry name" value="TPX"/>
</dbReference>
<dbReference type="InterPro" id="IPR018219">
    <property type="entry name" value="Tpx_CS"/>
</dbReference>
<dbReference type="InterPro" id="IPR050455">
    <property type="entry name" value="Tpx_Peroxidase_subfamily"/>
</dbReference>
<dbReference type="NCBIfam" id="NF001808">
    <property type="entry name" value="PRK00522.1"/>
    <property type="match status" value="1"/>
</dbReference>
<dbReference type="PANTHER" id="PTHR43110">
    <property type="entry name" value="THIOL PEROXIDASE"/>
    <property type="match status" value="1"/>
</dbReference>
<dbReference type="PANTHER" id="PTHR43110:SF1">
    <property type="entry name" value="THIOL PEROXIDASE"/>
    <property type="match status" value="1"/>
</dbReference>
<dbReference type="Pfam" id="PF08534">
    <property type="entry name" value="Redoxin"/>
    <property type="match status" value="1"/>
</dbReference>
<dbReference type="SUPFAM" id="SSF52833">
    <property type="entry name" value="Thioredoxin-like"/>
    <property type="match status" value="1"/>
</dbReference>
<dbReference type="PROSITE" id="PS51352">
    <property type="entry name" value="THIOREDOXIN_2"/>
    <property type="match status" value="1"/>
</dbReference>
<dbReference type="PROSITE" id="PS01265">
    <property type="entry name" value="TPX"/>
    <property type="match status" value="1"/>
</dbReference>
<accession>O66780</accession>
<gene>
    <name evidence="1" type="primary">tpx</name>
    <name type="ordered locus">aq_488</name>
</gene>
<evidence type="ECO:0000255" key="1">
    <source>
        <dbReference type="HAMAP-Rule" id="MF_00269"/>
    </source>
</evidence>
<evidence type="ECO:0007829" key="2">
    <source>
        <dbReference type="PDB" id="2YZH"/>
    </source>
</evidence>
<reference key="1">
    <citation type="journal article" date="1998" name="Nature">
        <title>The complete genome of the hyperthermophilic bacterium Aquifex aeolicus.</title>
        <authorList>
            <person name="Deckert G."/>
            <person name="Warren P.V."/>
            <person name="Gaasterland T."/>
            <person name="Young W.G."/>
            <person name="Lenox A.L."/>
            <person name="Graham D.E."/>
            <person name="Overbeek R."/>
            <person name="Snead M.A."/>
            <person name="Keller M."/>
            <person name="Aujay M."/>
            <person name="Huber R."/>
            <person name="Feldman R.A."/>
            <person name="Short J.M."/>
            <person name="Olsen G.J."/>
            <person name="Swanson R.V."/>
        </authorList>
    </citation>
    <scope>NUCLEOTIDE SEQUENCE [LARGE SCALE GENOMIC DNA]</scope>
    <source>
        <strain>VF5</strain>
    </source>
</reference>
<proteinExistence type="evidence at protein level"/>
<name>TPX_AQUAE</name>
<organism>
    <name type="scientific">Aquifex aeolicus (strain VF5)</name>
    <dbReference type="NCBI Taxonomy" id="224324"/>
    <lineage>
        <taxon>Bacteria</taxon>
        <taxon>Pseudomonadati</taxon>
        <taxon>Aquificota</taxon>
        <taxon>Aquificia</taxon>
        <taxon>Aquificales</taxon>
        <taxon>Aquificaceae</taxon>
        <taxon>Aquifex</taxon>
    </lineage>
</organism>
<feature type="chain" id="PRO_0000187868" description="Thiol peroxidase">
    <location>
        <begin position="1"/>
        <end position="169"/>
    </location>
</feature>
<feature type="domain" description="Thioredoxin" evidence="1">
    <location>
        <begin position="19"/>
        <end position="167"/>
    </location>
</feature>
<feature type="active site" description="Cysteine sulfenic acid (-SOH) intermediate" evidence="1">
    <location>
        <position position="61"/>
    </location>
</feature>
<feature type="disulfide bond" description="Redox-active" evidence="1">
    <location>
        <begin position="61"/>
        <end position="95"/>
    </location>
</feature>
<feature type="strand" evidence="2">
    <location>
        <begin position="3"/>
        <end position="7"/>
    </location>
</feature>
<feature type="strand" evidence="2">
    <location>
        <begin position="10"/>
        <end position="14"/>
    </location>
</feature>
<feature type="strand" evidence="2">
    <location>
        <begin position="28"/>
        <end position="32"/>
    </location>
</feature>
<feature type="strand" evidence="2">
    <location>
        <begin position="37"/>
        <end position="42"/>
    </location>
</feature>
<feature type="strand" evidence="2">
    <location>
        <begin position="45"/>
        <end position="52"/>
    </location>
</feature>
<feature type="helix" evidence="2">
    <location>
        <begin position="59"/>
        <end position="71"/>
    </location>
</feature>
<feature type="turn" evidence="2">
    <location>
        <begin position="72"/>
        <end position="74"/>
    </location>
</feature>
<feature type="strand" evidence="2">
    <location>
        <begin position="78"/>
        <end position="86"/>
    </location>
</feature>
<feature type="helix" evidence="2">
    <location>
        <begin position="88"/>
        <end position="97"/>
    </location>
</feature>
<feature type="strand" evidence="2">
    <location>
        <begin position="102"/>
        <end position="107"/>
    </location>
</feature>
<feature type="turn" evidence="2">
    <location>
        <begin position="109"/>
        <end position="111"/>
    </location>
</feature>
<feature type="helix" evidence="2">
    <location>
        <begin position="113"/>
        <end position="117"/>
    </location>
</feature>
<feature type="turn" evidence="2">
    <location>
        <begin position="125"/>
        <end position="128"/>
    </location>
</feature>
<feature type="strand" evidence="2">
    <location>
        <begin position="133"/>
        <end position="137"/>
    </location>
</feature>
<feature type="strand" evidence="2">
    <location>
        <begin position="141"/>
        <end position="148"/>
    </location>
</feature>
<feature type="helix" evidence="2">
    <location>
        <begin position="159"/>
        <end position="167"/>
    </location>
</feature>
<comment type="function">
    <text evidence="1">Thiol-specific peroxidase that catalyzes the reduction of hydrogen peroxide and organic hydroperoxides to water and alcohols, respectively. Plays a role in cell protection against oxidative stress by detoxifying peroxides.</text>
</comment>
<comment type="catalytic activity">
    <reaction evidence="1">
        <text>a hydroperoxide + [thioredoxin]-dithiol = an alcohol + [thioredoxin]-disulfide + H2O</text>
        <dbReference type="Rhea" id="RHEA:62620"/>
        <dbReference type="Rhea" id="RHEA-COMP:10698"/>
        <dbReference type="Rhea" id="RHEA-COMP:10700"/>
        <dbReference type="ChEBI" id="CHEBI:15377"/>
        <dbReference type="ChEBI" id="CHEBI:29950"/>
        <dbReference type="ChEBI" id="CHEBI:30879"/>
        <dbReference type="ChEBI" id="CHEBI:35924"/>
        <dbReference type="ChEBI" id="CHEBI:50058"/>
        <dbReference type="EC" id="1.11.1.24"/>
    </reaction>
</comment>
<comment type="subunit">
    <text evidence="1">Homodimer.</text>
</comment>
<comment type="miscellaneous">
    <text evidence="1">The active site is a conserved redox-active cysteine residue, the peroxidatic cysteine (C(P)), which makes the nucleophilic attack on the peroxide substrate. The peroxide oxidizes the C(P)-SH to cysteine sulfenic acid (C(P)-SOH), which then reacts with another cysteine residue, the resolving cysteine (C(R)), to form a disulfide bridge. The disulfide is subsequently reduced by an appropriate electron donor to complete the catalytic cycle. In this atypical 2-Cys peroxiredoxin, C(R) is present in the same subunit to form an intramolecular disulfide. The disulfide is subsequently reduced by thioredoxin.</text>
</comment>
<comment type="similarity">
    <text evidence="1">Belongs to the peroxiredoxin family. Tpx subfamily.</text>
</comment>
<keyword id="KW-0002">3D-structure</keyword>
<keyword id="KW-0049">Antioxidant</keyword>
<keyword id="KW-1015">Disulfide bond</keyword>
<keyword id="KW-0560">Oxidoreductase</keyword>
<keyword id="KW-0575">Peroxidase</keyword>
<keyword id="KW-0676">Redox-active center</keyword>
<keyword id="KW-1185">Reference proteome</keyword>
<sequence>MARTVNLKGNPVTLVGPELKVGDRAPEAVVVTKDLQEKIVGGAKDVVQVIITVPSLDTPVCETETKKFNEIMAGMEGVDVTVVSMDLPFAQKRFCESFNIQNVTVASDFRYRDMEKYGVLIGEGALKGILARAVFIIDKEGKVAYVQLVPEITEEPNYDEVVNKVKELI</sequence>